<proteinExistence type="evidence at transcript level"/>
<name>AP5M_ARATH</name>
<sequence>MPSGCSIRALWIINNQDTVVFSRRFPVVEKQWCSAYKTENENTGLDLPRLPTDQQISDSFTRRKRREGSTRGYGIRVAQSTKGSDSWVDDPITRHIISLCLTEEDDDDDDERNILWPIALHTKALYSILVLPLVEPKEMKDYVKLCRRSDCGPAVGEDLSLSSLLLNISSITGAFMVAHAFGDIISGDTVEPEVVVSVSPSVGGLFDSLTGSIGISSRAKPVAAPVASSNPSGAAITGATASDAPKAGSRLLDRDLLRNFIATAMPFGTPLDLSLSNISAMKANGFSSADPPPQELKQPAWKPYLYKGKQRLLFTIHETVSAAMYDRDEIPDNVSVAGQINCRAELEGLPDVSFPLAGLSTAHIEAISFHPCAQVPAHGIDKQNIVFQPPLGNFVLMRYQAGCGLGPPVKGFYQLSMVSEDEGAFLFKVHLMEGYKAPLSMEFCTITMPFPRRRIVAFDGTPSAGTVLTTEHSVEWRILGSGRSLSGKSLEATFPGTIKFSPLQSRRKGDGDDEESEDESAENVVNVEDFLVQKMNKDLPAAELEEPFCWQAYDYAKVSFKIVGASVSRMSIDTKSVNIYPTTKSPVEFSAQVTSGDYILWNTLGKAPSAAVV</sequence>
<dbReference type="EMBL" id="AC006234">
    <property type="protein sequence ID" value="AAD20916.1"/>
    <property type="molecule type" value="Genomic_DNA"/>
</dbReference>
<dbReference type="EMBL" id="CP002685">
    <property type="protein sequence ID" value="AEC07071.1"/>
    <property type="molecule type" value="Genomic_DNA"/>
</dbReference>
<dbReference type="EMBL" id="CP002685">
    <property type="protein sequence ID" value="AEC07073.1"/>
    <property type="molecule type" value="Genomic_DNA"/>
</dbReference>
<dbReference type="EMBL" id="AF462850">
    <property type="protein sequence ID" value="AAL58937.1"/>
    <property type="molecule type" value="mRNA"/>
</dbReference>
<dbReference type="EMBL" id="AY090282">
    <property type="protein sequence ID" value="AAL90943.1"/>
    <property type="molecule type" value="mRNA"/>
</dbReference>
<dbReference type="PIR" id="D84593">
    <property type="entry name" value="D84593"/>
</dbReference>
<dbReference type="RefSeq" id="NP_850004.1">
    <molecule id="Q8W0Z6-1"/>
    <property type="nucleotide sequence ID" value="NM_179673.3"/>
</dbReference>
<dbReference type="RefSeq" id="NP_973495.1">
    <molecule id="Q8W0Z6-2"/>
    <property type="nucleotide sequence ID" value="NM_201766.2"/>
</dbReference>
<dbReference type="BioGRID" id="1961">
    <property type="interactions" value="2"/>
</dbReference>
<dbReference type="FunCoup" id="Q8W0Z6">
    <property type="interactions" value="3136"/>
</dbReference>
<dbReference type="IntAct" id="Q8W0Z6">
    <property type="interactions" value="2"/>
</dbReference>
<dbReference type="STRING" id="3702.Q8W0Z6"/>
<dbReference type="GlyGen" id="Q8W0Z6">
    <property type="glycosylation" value="1 site"/>
</dbReference>
<dbReference type="iPTMnet" id="Q8W0Z6"/>
<dbReference type="PaxDb" id="3702-AT2G20790.1"/>
<dbReference type="ProteomicsDB" id="246664">
    <molecule id="Q8W0Z6-1"/>
</dbReference>
<dbReference type="EnsemblPlants" id="AT2G20790.1">
    <molecule id="Q8W0Z6-1"/>
    <property type="protein sequence ID" value="AT2G20790.1"/>
    <property type="gene ID" value="AT2G20790"/>
</dbReference>
<dbReference type="EnsemblPlants" id="AT2G20790.2">
    <molecule id="Q8W0Z6-2"/>
    <property type="protein sequence ID" value="AT2G20790.2"/>
    <property type="gene ID" value="AT2G20790"/>
</dbReference>
<dbReference type="GeneID" id="816608"/>
<dbReference type="Gramene" id="AT2G20790.1">
    <molecule id="Q8W0Z6-1"/>
    <property type="protein sequence ID" value="AT2G20790.1"/>
    <property type="gene ID" value="AT2G20790"/>
</dbReference>
<dbReference type="Gramene" id="AT2G20790.2">
    <molecule id="Q8W0Z6-2"/>
    <property type="protein sequence ID" value="AT2G20790.2"/>
    <property type="gene ID" value="AT2G20790"/>
</dbReference>
<dbReference type="KEGG" id="ath:AT2G20790"/>
<dbReference type="Araport" id="AT2G20790"/>
<dbReference type="TAIR" id="AT2G20790"/>
<dbReference type="eggNOG" id="KOG0937">
    <property type="taxonomic scope" value="Eukaryota"/>
</dbReference>
<dbReference type="InParanoid" id="Q8W0Z6"/>
<dbReference type="OMA" id="SYHPCAQ"/>
<dbReference type="PhylomeDB" id="Q8W0Z6"/>
<dbReference type="PRO" id="PR:Q8W0Z6"/>
<dbReference type="Proteomes" id="UP000006548">
    <property type="component" value="Chromosome 2"/>
</dbReference>
<dbReference type="ExpressionAtlas" id="Q8W0Z6">
    <property type="expression patterns" value="baseline and differential"/>
</dbReference>
<dbReference type="GO" id="GO:0030131">
    <property type="term" value="C:clathrin adaptor complex"/>
    <property type="evidence" value="ECO:0007669"/>
    <property type="project" value="InterPro"/>
</dbReference>
<dbReference type="GO" id="GO:0030659">
    <property type="term" value="C:cytoplasmic vesicle membrane"/>
    <property type="evidence" value="ECO:0007669"/>
    <property type="project" value="UniProtKB-SubCell"/>
</dbReference>
<dbReference type="GO" id="GO:0005739">
    <property type="term" value="C:mitochondrion"/>
    <property type="evidence" value="ECO:0007005"/>
    <property type="project" value="TAIR"/>
</dbReference>
<dbReference type="GO" id="GO:0006886">
    <property type="term" value="P:intracellular protein transport"/>
    <property type="evidence" value="ECO:0007669"/>
    <property type="project" value="InterPro"/>
</dbReference>
<dbReference type="GO" id="GO:0016192">
    <property type="term" value="P:vesicle-mediated transport"/>
    <property type="evidence" value="ECO:0007669"/>
    <property type="project" value="InterPro"/>
</dbReference>
<dbReference type="CDD" id="cd09256">
    <property type="entry name" value="AP_MuD_MHD"/>
    <property type="match status" value="1"/>
</dbReference>
<dbReference type="FunFam" id="2.60.40.1170:FF:000027">
    <property type="entry name" value="Adaptor complexes medium subunit family protein"/>
    <property type="match status" value="1"/>
</dbReference>
<dbReference type="FunFam" id="2.60.40.1170:FF:000025">
    <property type="entry name" value="AP-5 complex subunit mu isoform X1"/>
    <property type="match status" value="1"/>
</dbReference>
<dbReference type="Gene3D" id="2.60.40.1170">
    <property type="entry name" value="Mu homology domain, subdomain B"/>
    <property type="match status" value="1"/>
</dbReference>
<dbReference type="InterPro" id="IPR036168">
    <property type="entry name" value="AP2_Mu_C_sf"/>
</dbReference>
<dbReference type="InterPro" id="IPR039591">
    <property type="entry name" value="AP5M1"/>
</dbReference>
<dbReference type="InterPro" id="IPR018240">
    <property type="entry name" value="Clathrin_mu_CS"/>
</dbReference>
<dbReference type="InterPro" id="IPR028565">
    <property type="entry name" value="MHD"/>
</dbReference>
<dbReference type="PANTHER" id="PTHR16082">
    <property type="entry name" value="AP-5 COMPLEX SUBUNIT MU-1"/>
    <property type="match status" value="1"/>
</dbReference>
<dbReference type="PANTHER" id="PTHR16082:SF2">
    <property type="entry name" value="AP-5 COMPLEX SUBUNIT MU-1"/>
    <property type="match status" value="1"/>
</dbReference>
<dbReference type="Pfam" id="PF00928">
    <property type="entry name" value="Adap_comp_sub"/>
    <property type="match status" value="1"/>
</dbReference>
<dbReference type="SUPFAM" id="SSF49447">
    <property type="entry name" value="Second domain of Mu2 adaptin subunit (ap50) of ap2 adaptor"/>
    <property type="match status" value="1"/>
</dbReference>
<dbReference type="PROSITE" id="PS00991">
    <property type="entry name" value="CLAT_ADAPTOR_M_2"/>
    <property type="match status" value="1"/>
</dbReference>
<dbReference type="PROSITE" id="PS51072">
    <property type="entry name" value="MHD"/>
    <property type="match status" value="1"/>
</dbReference>
<comment type="subunit">
    <text evidence="1">Probably part of the adaptor protein complex 5 (AP-5).</text>
</comment>
<comment type="subcellular location">
    <subcellularLocation>
        <location evidence="1">Cytoplasmic vesicle membrane</location>
        <topology evidence="1">Peripheral membrane protein</topology>
        <orientation evidence="1">Cytoplasmic side</orientation>
    </subcellularLocation>
</comment>
<comment type="alternative products">
    <event type="alternative splicing"/>
    <isoform>
        <id>Q8W0Z6-1</id>
        <name>1</name>
        <sequence type="displayed"/>
    </isoform>
    <isoform>
        <id>Q8W0Z6-2</id>
        <name>2</name>
        <sequence type="described" ref="VSP_053359"/>
    </isoform>
</comment>
<comment type="similarity">
    <text evidence="4">Belongs to the adaptor complexes medium subunit family.</text>
</comment>
<accession>Q8W0Z6</accession>
<accession>Q9SKT8</accession>
<organism>
    <name type="scientific">Arabidopsis thaliana</name>
    <name type="common">Mouse-ear cress</name>
    <dbReference type="NCBI Taxonomy" id="3702"/>
    <lineage>
        <taxon>Eukaryota</taxon>
        <taxon>Viridiplantae</taxon>
        <taxon>Streptophyta</taxon>
        <taxon>Embryophyta</taxon>
        <taxon>Tracheophyta</taxon>
        <taxon>Spermatophyta</taxon>
        <taxon>Magnoliopsida</taxon>
        <taxon>eudicotyledons</taxon>
        <taxon>Gunneridae</taxon>
        <taxon>Pentapetalae</taxon>
        <taxon>rosids</taxon>
        <taxon>malvids</taxon>
        <taxon>Brassicales</taxon>
        <taxon>Brassicaceae</taxon>
        <taxon>Camelineae</taxon>
        <taxon>Arabidopsis</taxon>
    </lineage>
</organism>
<feature type="chain" id="PRO_0000424265" description="AP-5 complex subunit mu">
    <location>
        <begin position="1"/>
        <end position="613"/>
    </location>
</feature>
<feature type="domain" description="MHD" evidence="2">
    <location>
        <begin position="309"/>
        <end position="563"/>
    </location>
</feature>
<feature type="region of interest" description="Disordered" evidence="3">
    <location>
        <begin position="501"/>
        <end position="522"/>
    </location>
</feature>
<feature type="compositionally biased region" description="Acidic residues" evidence="3">
    <location>
        <begin position="511"/>
        <end position="521"/>
    </location>
</feature>
<feature type="splice variant" id="VSP_053359" description="In isoform 2." evidence="4">
    <location>
        <begin position="1"/>
        <end position="138"/>
    </location>
</feature>
<keyword id="KW-0025">Alternative splicing</keyword>
<keyword id="KW-0968">Cytoplasmic vesicle</keyword>
<keyword id="KW-0472">Membrane</keyword>
<keyword id="KW-0653">Protein transport</keyword>
<keyword id="KW-1185">Reference proteome</keyword>
<keyword id="KW-0813">Transport</keyword>
<evidence type="ECO:0000250" key="1"/>
<evidence type="ECO:0000255" key="2">
    <source>
        <dbReference type="PROSITE-ProRule" id="PRU00404"/>
    </source>
</evidence>
<evidence type="ECO:0000256" key="3">
    <source>
        <dbReference type="SAM" id="MobiDB-lite"/>
    </source>
</evidence>
<evidence type="ECO:0000305" key="4"/>
<reference key="1">
    <citation type="journal article" date="1999" name="Nature">
        <title>Sequence and analysis of chromosome 2 of the plant Arabidopsis thaliana.</title>
        <authorList>
            <person name="Lin X."/>
            <person name="Kaul S."/>
            <person name="Rounsley S.D."/>
            <person name="Shea T.P."/>
            <person name="Benito M.-I."/>
            <person name="Town C.D."/>
            <person name="Fujii C.Y."/>
            <person name="Mason T.M."/>
            <person name="Bowman C.L."/>
            <person name="Barnstead M.E."/>
            <person name="Feldblyum T.V."/>
            <person name="Buell C.R."/>
            <person name="Ketchum K.A."/>
            <person name="Lee J.J."/>
            <person name="Ronning C.M."/>
            <person name="Koo H.L."/>
            <person name="Moffat K.S."/>
            <person name="Cronin L.A."/>
            <person name="Shen M."/>
            <person name="Pai G."/>
            <person name="Van Aken S."/>
            <person name="Umayam L."/>
            <person name="Tallon L.J."/>
            <person name="Gill J.E."/>
            <person name="Adams M.D."/>
            <person name="Carrera A.J."/>
            <person name="Creasy T.H."/>
            <person name="Goodman H.M."/>
            <person name="Somerville C.R."/>
            <person name="Copenhaver G.P."/>
            <person name="Preuss D."/>
            <person name="Nierman W.C."/>
            <person name="White O."/>
            <person name="Eisen J.A."/>
            <person name="Salzberg S.L."/>
            <person name="Fraser C.M."/>
            <person name="Venter J.C."/>
        </authorList>
    </citation>
    <scope>NUCLEOTIDE SEQUENCE [LARGE SCALE GENOMIC DNA]</scope>
    <source>
        <strain>cv. Columbia</strain>
    </source>
</reference>
<reference key="2">
    <citation type="journal article" date="2017" name="Plant J.">
        <title>Araport11: a complete reannotation of the Arabidopsis thaliana reference genome.</title>
        <authorList>
            <person name="Cheng C.Y."/>
            <person name="Krishnakumar V."/>
            <person name="Chan A.P."/>
            <person name="Thibaud-Nissen F."/>
            <person name="Schobel S."/>
            <person name="Town C.D."/>
        </authorList>
    </citation>
    <scope>GENOME REANNOTATION</scope>
    <source>
        <strain>cv. Columbia</strain>
    </source>
</reference>
<reference key="3">
    <citation type="journal article" date="2003" name="Science">
        <title>Empirical analysis of transcriptional activity in the Arabidopsis genome.</title>
        <authorList>
            <person name="Yamada K."/>
            <person name="Lim J."/>
            <person name="Dale J.M."/>
            <person name="Chen H."/>
            <person name="Shinn P."/>
            <person name="Palm C.J."/>
            <person name="Southwick A.M."/>
            <person name="Wu H.C."/>
            <person name="Kim C.J."/>
            <person name="Nguyen M."/>
            <person name="Pham P.K."/>
            <person name="Cheuk R.F."/>
            <person name="Karlin-Newmann G."/>
            <person name="Liu S.X."/>
            <person name="Lam B."/>
            <person name="Sakano H."/>
            <person name="Wu T."/>
            <person name="Yu G."/>
            <person name="Miranda M."/>
            <person name="Quach H.L."/>
            <person name="Tripp M."/>
            <person name="Chang C.H."/>
            <person name="Lee J.M."/>
            <person name="Toriumi M.J."/>
            <person name="Chan M.M."/>
            <person name="Tang C.C."/>
            <person name="Onodera C.S."/>
            <person name="Deng J.M."/>
            <person name="Akiyama K."/>
            <person name="Ansari Y."/>
            <person name="Arakawa T."/>
            <person name="Banh J."/>
            <person name="Banno F."/>
            <person name="Bowser L."/>
            <person name="Brooks S.Y."/>
            <person name="Carninci P."/>
            <person name="Chao Q."/>
            <person name="Choy N."/>
            <person name="Enju A."/>
            <person name="Goldsmith A.D."/>
            <person name="Gurjal M."/>
            <person name="Hansen N.F."/>
            <person name="Hayashizaki Y."/>
            <person name="Johnson-Hopson C."/>
            <person name="Hsuan V.W."/>
            <person name="Iida K."/>
            <person name="Karnes M."/>
            <person name="Khan S."/>
            <person name="Koesema E."/>
            <person name="Ishida J."/>
            <person name="Jiang P.X."/>
            <person name="Jones T."/>
            <person name="Kawai J."/>
            <person name="Kamiya A."/>
            <person name="Meyers C."/>
            <person name="Nakajima M."/>
            <person name="Narusaka M."/>
            <person name="Seki M."/>
            <person name="Sakurai T."/>
            <person name="Satou M."/>
            <person name="Tamse R."/>
            <person name="Vaysberg M."/>
            <person name="Wallender E.K."/>
            <person name="Wong C."/>
            <person name="Yamamura Y."/>
            <person name="Yuan S."/>
            <person name="Shinozaki K."/>
            <person name="Davis R.W."/>
            <person name="Theologis A."/>
            <person name="Ecker J.R."/>
        </authorList>
    </citation>
    <scope>NUCLEOTIDE SEQUENCE [LARGE SCALE MRNA] (ISOFORM 1)</scope>
    <source>
        <strain>cv. Columbia</strain>
    </source>
</reference>
<reference key="4">
    <citation type="journal article" date="2011" name="PLoS Biol.">
        <title>The fifth adaptor protein complex.</title>
        <authorList>
            <person name="Hirst J."/>
            <person name="Barlow L.D."/>
            <person name="Francisco G.C."/>
            <person name="Sahlender D.A."/>
            <person name="Seaman M.N."/>
            <person name="Dacks J.B."/>
            <person name="Robinson M.S."/>
        </authorList>
    </citation>
    <scope>REVIEW</scope>
</reference>
<protein>
    <recommendedName>
        <fullName>AP-5 complex subunit mu</fullName>
    </recommendedName>
    <alternativeName>
        <fullName>Adaptor protein complex AP-5 subunit mu</fullName>
    </alternativeName>
    <alternativeName>
        <fullName>Adaptor protein-5 mu-adaptin</fullName>
    </alternativeName>
    <alternativeName>
        <fullName>Adaptor-related protein complex 5 subunit mu</fullName>
    </alternativeName>
    <alternativeName>
        <fullName>Mu5-adaptin</fullName>
    </alternativeName>
</protein>
<gene>
    <name type="primary">AP5M</name>
    <name type="ordered locus">At2g20790</name>
    <name type="ORF">F5H14.24</name>
</gene>